<proteinExistence type="inferred from homology"/>
<sequence length="875" mass="97638">MLSNTLRSNFLKFYANRNHTPVASSPVFPHNDPSILFTNAGMNQFKNIFLGKEQTSYTRATTSQKCIRAGGKHNDLENVGHTSRHLTFFEMLGNFSFGDYFKQDAISFAWEVSLSVFNFDPDFIYATVHEKDDEAFALWEKYLPTDRIFRLTDKDNFWSMADTGPCGFCSELLFDRGEKFGKAASPLEDVDGERFLEYWNLVFMEFNRTSDGTLLALQKKCVDTGAGLERLVSLLAETKTVFEADVLRHLISKIENLSGTTYSPTEAKGAAFRVIADHIRSLSFAIADGLLPGNTERGYVLRKILRRAVNYGKRLGFNRPFLADVVPSLVDVMGEAYPELSASVTQIQEVLTTEEEHFFKTLQRGGNLLQQVLKSSASSAKISGEDAFKLKDTYGLPIDEIALLAKDYNYAIDMDTFEKLEVEAKERSRKNTKKTKNDSDSVFQDLDPTNTSEFIGYDTLSCDTFIEGIIKYNEIASSLEEGDEGAIILRTTPFYAEKGGQIGDSGEIFCESGTFLVSHTIAPKAGLIVHLGKLSQGSLTTTMAVTAQVNQNLRKKTANNHTGCHLLHKALEMTLGEHIRQAGSYVDSQKIRLDFTHNKALSPEDLLAIETLVNEKIRENDPVTIREVLYSDVMSSSEIKQFCGDKYGDIVRVVLAGFSHELCGGTHAQATGDIGYFRITKEHAVATGIRRIEATTGEDAENIARGQDVDLNEIATVIQSPKDQILVKIRSVMEEKKDLAKQVADLENQLVQQQVKTLLTSCEKICDTSYLVYYLTEEEGQRIQHYANAIHKEIPTNFISLWITEKNGRYIVLSRVSDDLTKRGVQAHTLLAELLAPYGGRCGGKAISAQGSSAELPQIEFLNKTLRQWISTQLA</sequence>
<name>SYA_CHLTB</name>
<gene>
    <name evidence="1" type="primary">alaS</name>
    <name type="ordered locus">CTLon_0118</name>
</gene>
<dbReference type="EC" id="6.1.1.7" evidence="1"/>
<dbReference type="EMBL" id="AM884177">
    <property type="protein sequence ID" value="CAP06516.1"/>
    <property type="molecule type" value="Genomic_DNA"/>
</dbReference>
<dbReference type="RefSeq" id="WP_009873349.1">
    <property type="nucleotide sequence ID" value="NC_010280.2"/>
</dbReference>
<dbReference type="SMR" id="B0BAK4"/>
<dbReference type="KEGG" id="ctl:CTLon_0118"/>
<dbReference type="HOGENOM" id="CLU_004485_1_1_0"/>
<dbReference type="Proteomes" id="UP001154401">
    <property type="component" value="Chromosome"/>
</dbReference>
<dbReference type="GO" id="GO:0005829">
    <property type="term" value="C:cytosol"/>
    <property type="evidence" value="ECO:0007669"/>
    <property type="project" value="TreeGrafter"/>
</dbReference>
<dbReference type="GO" id="GO:0004813">
    <property type="term" value="F:alanine-tRNA ligase activity"/>
    <property type="evidence" value="ECO:0007669"/>
    <property type="project" value="UniProtKB-UniRule"/>
</dbReference>
<dbReference type="GO" id="GO:0002161">
    <property type="term" value="F:aminoacyl-tRNA deacylase activity"/>
    <property type="evidence" value="ECO:0007669"/>
    <property type="project" value="TreeGrafter"/>
</dbReference>
<dbReference type="GO" id="GO:0005524">
    <property type="term" value="F:ATP binding"/>
    <property type="evidence" value="ECO:0007669"/>
    <property type="project" value="UniProtKB-UniRule"/>
</dbReference>
<dbReference type="GO" id="GO:0000049">
    <property type="term" value="F:tRNA binding"/>
    <property type="evidence" value="ECO:0007669"/>
    <property type="project" value="UniProtKB-KW"/>
</dbReference>
<dbReference type="GO" id="GO:0008270">
    <property type="term" value="F:zinc ion binding"/>
    <property type="evidence" value="ECO:0007669"/>
    <property type="project" value="UniProtKB-UniRule"/>
</dbReference>
<dbReference type="GO" id="GO:0006419">
    <property type="term" value="P:alanyl-tRNA aminoacylation"/>
    <property type="evidence" value="ECO:0007669"/>
    <property type="project" value="UniProtKB-UniRule"/>
</dbReference>
<dbReference type="CDD" id="cd00673">
    <property type="entry name" value="AlaRS_core"/>
    <property type="match status" value="1"/>
</dbReference>
<dbReference type="FunFam" id="2.40.30.130:FF:000001">
    <property type="entry name" value="Alanine--tRNA ligase"/>
    <property type="match status" value="1"/>
</dbReference>
<dbReference type="FunFam" id="3.30.930.10:FF:000004">
    <property type="entry name" value="Alanine--tRNA ligase"/>
    <property type="match status" value="1"/>
</dbReference>
<dbReference type="FunFam" id="3.30.980.10:FF:000004">
    <property type="entry name" value="Alanine--tRNA ligase, cytoplasmic"/>
    <property type="match status" value="1"/>
</dbReference>
<dbReference type="Gene3D" id="2.40.30.130">
    <property type="match status" value="1"/>
</dbReference>
<dbReference type="Gene3D" id="3.10.310.40">
    <property type="match status" value="1"/>
</dbReference>
<dbReference type="Gene3D" id="3.30.54.20">
    <property type="match status" value="1"/>
</dbReference>
<dbReference type="Gene3D" id="3.30.930.10">
    <property type="entry name" value="Bira Bifunctional Protein, Domain 2"/>
    <property type="match status" value="1"/>
</dbReference>
<dbReference type="Gene3D" id="3.30.980.10">
    <property type="entry name" value="Threonyl-trna Synthetase, Chain A, domain 2"/>
    <property type="match status" value="1"/>
</dbReference>
<dbReference type="HAMAP" id="MF_00036_B">
    <property type="entry name" value="Ala_tRNA_synth_B"/>
    <property type="match status" value="1"/>
</dbReference>
<dbReference type="InterPro" id="IPR045864">
    <property type="entry name" value="aa-tRNA-synth_II/BPL/LPL"/>
</dbReference>
<dbReference type="InterPro" id="IPR002318">
    <property type="entry name" value="Ala-tRNA-lgiase_IIc"/>
</dbReference>
<dbReference type="InterPro" id="IPR018162">
    <property type="entry name" value="Ala-tRNA-ligase_IIc_anticod-bd"/>
</dbReference>
<dbReference type="InterPro" id="IPR018165">
    <property type="entry name" value="Ala-tRNA-synth_IIc_core"/>
</dbReference>
<dbReference type="InterPro" id="IPR018164">
    <property type="entry name" value="Ala-tRNA-synth_IIc_N"/>
</dbReference>
<dbReference type="InterPro" id="IPR050058">
    <property type="entry name" value="Ala-tRNA_ligase"/>
</dbReference>
<dbReference type="InterPro" id="IPR023033">
    <property type="entry name" value="Ala_tRNA_ligase_euk/bac"/>
</dbReference>
<dbReference type="InterPro" id="IPR003156">
    <property type="entry name" value="DHHA1_dom"/>
</dbReference>
<dbReference type="InterPro" id="IPR018163">
    <property type="entry name" value="Thr/Ala-tRNA-synth_IIc_edit"/>
</dbReference>
<dbReference type="InterPro" id="IPR009000">
    <property type="entry name" value="Transl_B-barrel_sf"/>
</dbReference>
<dbReference type="InterPro" id="IPR012947">
    <property type="entry name" value="tRNA_SAD"/>
</dbReference>
<dbReference type="NCBIfam" id="TIGR00344">
    <property type="entry name" value="alaS"/>
    <property type="match status" value="1"/>
</dbReference>
<dbReference type="PANTHER" id="PTHR11777:SF9">
    <property type="entry name" value="ALANINE--TRNA LIGASE, CYTOPLASMIC"/>
    <property type="match status" value="1"/>
</dbReference>
<dbReference type="PANTHER" id="PTHR11777">
    <property type="entry name" value="ALANYL-TRNA SYNTHETASE"/>
    <property type="match status" value="1"/>
</dbReference>
<dbReference type="Pfam" id="PF02272">
    <property type="entry name" value="DHHA1"/>
    <property type="match status" value="1"/>
</dbReference>
<dbReference type="Pfam" id="PF01411">
    <property type="entry name" value="tRNA-synt_2c"/>
    <property type="match status" value="1"/>
</dbReference>
<dbReference type="Pfam" id="PF07973">
    <property type="entry name" value="tRNA_SAD"/>
    <property type="match status" value="1"/>
</dbReference>
<dbReference type="PRINTS" id="PR00980">
    <property type="entry name" value="TRNASYNTHALA"/>
</dbReference>
<dbReference type="SMART" id="SM00863">
    <property type="entry name" value="tRNA_SAD"/>
    <property type="match status" value="1"/>
</dbReference>
<dbReference type="SUPFAM" id="SSF55681">
    <property type="entry name" value="Class II aaRS and biotin synthetases"/>
    <property type="match status" value="1"/>
</dbReference>
<dbReference type="SUPFAM" id="SSF101353">
    <property type="entry name" value="Putative anticodon-binding domain of alanyl-tRNA synthetase (AlaRS)"/>
    <property type="match status" value="1"/>
</dbReference>
<dbReference type="SUPFAM" id="SSF55186">
    <property type="entry name" value="ThrRS/AlaRS common domain"/>
    <property type="match status" value="1"/>
</dbReference>
<dbReference type="SUPFAM" id="SSF50447">
    <property type="entry name" value="Translation proteins"/>
    <property type="match status" value="1"/>
</dbReference>
<dbReference type="PROSITE" id="PS50860">
    <property type="entry name" value="AA_TRNA_LIGASE_II_ALA"/>
    <property type="match status" value="1"/>
</dbReference>
<keyword id="KW-0030">Aminoacyl-tRNA synthetase</keyword>
<keyword id="KW-0067">ATP-binding</keyword>
<keyword id="KW-0963">Cytoplasm</keyword>
<keyword id="KW-0436">Ligase</keyword>
<keyword id="KW-0479">Metal-binding</keyword>
<keyword id="KW-0547">Nucleotide-binding</keyword>
<keyword id="KW-0648">Protein biosynthesis</keyword>
<keyword id="KW-0694">RNA-binding</keyword>
<keyword id="KW-0820">tRNA-binding</keyword>
<keyword id="KW-0862">Zinc</keyword>
<comment type="function">
    <text evidence="1">Catalyzes the attachment of alanine to tRNA(Ala) in a two-step reaction: alanine is first activated by ATP to form Ala-AMP and then transferred to the acceptor end of tRNA(Ala). Also edits incorrectly charged Ser-tRNA(Ala) and Gly-tRNA(Ala) via its editing domain.</text>
</comment>
<comment type="catalytic activity">
    <reaction evidence="1">
        <text>tRNA(Ala) + L-alanine + ATP = L-alanyl-tRNA(Ala) + AMP + diphosphate</text>
        <dbReference type="Rhea" id="RHEA:12540"/>
        <dbReference type="Rhea" id="RHEA-COMP:9657"/>
        <dbReference type="Rhea" id="RHEA-COMP:9923"/>
        <dbReference type="ChEBI" id="CHEBI:30616"/>
        <dbReference type="ChEBI" id="CHEBI:33019"/>
        <dbReference type="ChEBI" id="CHEBI:57972"/>
        <dbReference type="ChEBI" id="CHEBI:78442"/>
        <dbReference type="ChEBI" id="CHEBI:78497"/>
        <dbReference type="ChEBI" id="CHEBI:456215"/>
        <dbReference type="EC" id="6.1.1.7"/>
    </reaction>
</comment>
<comment type="cofactor">
    <cofactor evidence="1">
        <name>Zn(2+)</name>
        <dbReference type="ChEBI" id="CHEBI:29105"/>
    </cofactor>
    <text evidence="1">Binds 1 zinc ion per subunit.</text>
</comment>
<comment type="subcellular location">
    <subcellularLocation>
        <location evidence="1">Cytoplasm</location>
    </subcellularLocation>
</comment>
<comment type="domain">
    <text evidence="1">Consists of three domains; the N-terminal catalytic domain, the editing domain and the C-terminal C-Ala domain. The editing domain removes incorrectly charged amino acids, while the C-Ala domain, along with tRNA(Ala), serves as a bridge to cooperatively bring together the editing and aminoacylation centers thus stimulating deacylation of misacylated tRNAs.</text>
</comment>
<comment type="similarity">
    <text evidence="1">Belongs to the class-II aminoacyl-tRNA synthetase family.</text>
</comment>
<feature type="chain" id="PRO_0000347549" description="Alanine--tRNA ligase">
    <location>
        <begin position="1"/>
        <end position="875"/>
    </location>
</feature>
<feature type="binding site" evidence="1">
    <location>
        <position position="561"/>
    </location>
    <ligand>
        <name>Zn(2+)</name>
        <dbReference type="ChEBI" id="CHEBI:29105"/>
    </ligand>
</feature>
<feature type="binding site" evidence="1">
    <location>
        <position position="565"/>
    </location>
    <ligand>
        <name>Zn(2+)</name>
        <dbReference type="ChEBI" id="CHEBI:29105"/>
    </ligand>
</feature>
<feature type="binding site" evidence="1">
    <location>
        <position position="663"/>
    </location>
    <ligand>
        <name>Zn(2+)</name>
        <dbReference type="ChEBI" id="CHEBI:29105"/>
    </ligand>
</feature>
<feature type="binding site" evidence="1">
    <location>
        <position position="667"/>
    </location>
    <ligand>
        <name>Zn(2+)</name>
        <dbReference type="ChEBI" id="CHEBI:29105"/>
    </ligand>
</feature>
<evidence type="ECO:0000255" key="1">
    <source>
        <dbReference type="HAMAP-Rule" id="MF_00036"/>
    </source>
</evidence>
<accession>B0BAK4</accession>
<protein>
    <recommendedName>
        <fullName evidence="1">Alanine--tRNA ligase</fullName>
        <ecNumber evidence="1">6.1.1.7</ecNumber>
    </recommendedName>
    <alternativeName>
        <fullName evidence="1">Alanyl-tRNA synthetase</fullName>
        <shortName evidence="1">AlaRS</shortName>
    </alternativeName>
</protein>
<organism>
    <name type="scientific">Chlamydia trachomatis serovar L2b (strain UCH-1/proctitis)</name>
    <dbReference type="NCBI Taxonomy" id="471473"/>
    <lineage>
        <taxon>Bacteria</taxon>
        <taxon>Pseudomonadati</taxon>
        <taxon>Chlamydiota</taxon>
        <taxon>Chlamydiia</taxon>
        <taxon>Chlamydiales</taxon>
        <taxon>Chlamydiaceae</taxon>
        <taxon>Chlamydia/Chlamydophila group</taxon>
        <taxon>Chlamydia</taxon>
    </lineage>
</organism>
<reference key="1">
    <citation type="journal article" date="2008" name="Genome Res.">
        <title>Chlamydia trachomatis: genome sequence analysis of lymphogranuloma venereum isolates.</title>
        <authorList>
            <person name="Thomson N.R."/>
            <person name="Holden M.T.G."/>
            <person name="Carder C."/>
            <person name="Lennard N."/>
            <person name="Lockey S.J."/>
            <person name="Marsh P."/>
            <person name="Skipp P."/>
            <person name="O'Connor C.D."/>
            <person name="Goodhead I."/>
            <person name="Norbertzcak H."/>
            <person name="Harris B."/>
            <person name="Ormond D."/>
            <person name="Rance R."/>
            <person name="Quail M.A."/>
            <person name="Parkhill J."/>
            <person name="Stephens R.S."/>
            <person name="Clarke I.N."/>
        </authorList>
    </citation>
    <scope>NUCLEOTIDE SEQUENCE [LARGE SCALE GENOMIC DNA]</scope>
    <source>
        <strain>UCH-1/proctitis</strain>
    </source>
</reference>